<proteinExistence type="inferred from homology"/>
<name>END4_STAAB</name>
<accession>Q2YT22</accession>
<keyword id="KW-0227">DNA damage</keyword>
<keyword id="KW-0234">DNA repair</keyword>
<keyword id="KW-0255">Endonuclease</keyword>
<keyword id="KW-0378">Hydrolase</keyword>
<keyword id="KW-0479">Metal-binding</keyword>
<keyword id="KW-0540">Nuclease</keyword>
<keyword id="KW-0862">Zinc</keyword>
<reference key="1">
    <citation type="journal article" date="2007" name="PLoS ONE">
        <title>Molecular correlates of host specialization in Staphylococcus aureus.</title>
        <authorList>
            <person name="Herron-Olson L."/>
            <person name="Fitzgerald J.R."/>
            <person name="Musser J.M."/>
            <person name="Kapur V."/>
        </authorList>
    </citation>
    <scope>NUCLEOTIDE SEQUENCE [LARGE SCALE GENOMIC DNA]</scope>
    <source>
        <strain>bovine RF122 / ET3-1</strain>
    </source>
</reference>
<sequence length="296" mass="33159">MLLGSHVSMSGKKMLEGSAIEAHEYGETTFMIYTGAPQNTRRKSIEDLNITKGHEVMEKYGLSNIVVHAPYIINIANTTKPETFNLGVDFLQQEIERTQAIGAKDIVLHPGAHVGAGVDAGINKIIEGLNEVLTNDNNVRIALETMAGKGTEIGRSFEELARIIDGVHNNERLSVCFDTCHTHDAGYNVKEDFDGVLNEFDKIIGVDRIKVVHVNDSKNDRGAQKDRHENIGFGYIGFDALNYIVHHDSFKDIPKILETPYVGEDKKNKKPPYKLEIEMLKQQQFDPELKNKVMQQ</sequence>
<comment type="function">
    <text evidence="1">Endonuclease IV plays a role in DNA repair. It cleaves phosphodiester bonds at apurinic or apyrimidinic (AP) sites, generating a 3'-hydroxyl group and a 5'-terminal sugar phosphate.</text>
</comment>
<comment type="catalytic activity">
    <reaction evidence="1">
        <text>Endonucleolytic cleavage to 5'-phosphooligonucleotide end-products.</text>
        <dbReference type="EC" id="3.1.21.2"/>
    </reaction>
</comment>
<comment type="cofactor">
    <cofactor evidence="1">
        <name>Zn(2+)</name>
        <dbReference type="ChEBI" id="CHEBI:29105"/>
    </cofactor>
    <text evidence="1">Binds 3 Zn(2+) ions.</text>
</comment>
<comment type="similarity">
    <text evidence="1">Belongs to the AP endonuclease 2 family.</text>
</comment>
<evidence type="ECO:0000255" key="1">
    <source>
        <dbReference type="HAMAP-Rule" id="MF_00152"/>
    </source>
</evidence>
<feature type="chain" id="PRO_1000011339" description="Probable endonuclease 4">
    <location>
        <begin position="1"/>
        <end position="296"/>
    </location>
</feature>
<feature type="binding site" evidence="1">
    <location>
        <position position="68"/>
    </location>
    <ligand>
        <name>Zn(2+)</name>
        <dbReference type="ChEBI" id="CHEBI:29105"/>
        <label>1</label>
    </ligand>
</feature>
<feature type="binding site" evidence="1">
    <location>
        <position position="109"/>
    </location>
    <ligand>
        <name>Zn(2+)</name>
        <dbReference type="ChEBI" id="CHEBI:29105"/>
        <label>1</label>
    </ligand>
</feature>
<feature type="binding site" evidence="1">
    <location>
        <position position="144"/>
    </location>
    <ligand>
        <name>Zn(2+)</name>
        <dbReference type="ChEBI" id="CHEBI:29105"/>
        <label>1</label>
    </ligand>
</feature>
<feature type="binding site" evidence="1">
    <location>
        <position position="144"/>
    </location>
    <ligand>
        <name>Zn(2+)</name>
        <dbReference type="ChEBI" id="CHEBI:29105"/>
        <label>2</label>
    </ligand>
</feature>
<feature type="binding site" evidence="1">
    <location>
        <position position="178"/>
    </location>
    <ligand>
        <name>Zn(2+)</name>
        <dbReference type="ChEBI" id="CHEBI:29105"/>
        <label>2</label>
    </ligand>
</feature>
<feature type="binding site" evidence="1">
    <location>
        <position position="181"/>
    </location>
    <ligand>
        <name>Zn(2+)</name>
        <dbReference type="ChEBI" id="CHEBI:29105"/>
        <label>3</label>
    </ligand>
</feature>
<feature type="binding site" evidence="1">
    <location>
        <position position="213"/>
    </location>
    <ligand>
        <name>Zn(2+)</name>
        <dbReference type="ChEBI" id="CHEBI:29105"/>
        <label>2</label>
    </ligand>
</feature>
<feature type="binding site" evidence="1">
    <location>
        <position position="226"/>
    </location>
    <ligand>
        <name>Zn(2+)</name>
        <dbReference type="ChEBI" id="CHEBI:29105"/>
        <label>3</label>
    </ligand>
</feature>
<feature type="binding site" evidence="1">
    <location>
        <position position="228"/>
    </location>
    <ligand>
        <name>Zn(2+)</name>
        <dbReference type="ChEBI" id="CHEBI:29105"/>
        <label>3</label>
    </ligand>
</feature>
<feature type="binding site" evidence="1">
    <location>
        <position position="258"/>
    </location>
    <ligand>
        <name>Zn(2+)</name>
        <dbReference type="ChEBI" id="CHEBI:29105"/>
        <label>2</label>
    </ligand>
</feature>
<gene>
    <name evidence="1" type="primary">nfo</name>
    <name type="ordered locus">SAB1429c</name>
</gene>
<protein>
    <recommendedName>
        <fullName evidence="1">Probable endonuclease 4</fullName>
        <ecNumber evidence="1">3.1.21.2</ecNumber>
    </recommendedName>
    <alternativeName>
        <fullName evidence="1">Endodeoxyribonuclease IV</fullName>
    </alternativeName>
    <alternativeName>
        <fullName evidence="1">Endonuclease IV</fullName>
    </alternativeName>
</protein>
<organism>
    <name type="scientific">Staphylococcus aureus (strain bovine RF122 / ET3-1)</name>
    <dbReference type="NCBI Taxonomy" id="273036"/>
    <lineage>
        <taxon>Bacteria</taxon>
        <taxon>Bacillati</taxon>
        <taxon>Bacillota</taxon>
        <taxon>Bacilli</taxon>
        <taxon>Bacillales</taxon>
        <taxon>Staphylococcaceae</taxon>
        <taxon>Staphylococcus</taxon>
    </lineage>
</organism>
<dbReference type="EC" id="3.1.21.2" evidence="1"/>
<dbReference type="EMBL" id="AJ938182">
    <property type="protein sequence ID" value="CAI81118.1"/>
    <property type="molecule type" value="Genomic_DNA"/>
</dbReference>
<dbReference type="RefSeq" id="WP_000924214.1">
    <property type="nucleotide sequence ID" value="NC_007622.1"/>
</dbReference>
<dbReference type="SMR" id="Q2YT22"/>
<dbReference type="KEGG" id="sab:SAB1429c"/>
<dbReference type="HOGENOM" id="CLU_025885_4_1_9"/>
<dbReference type="GO" id="GO:0008833">
    <property type="term" value="F:deoxyribonuclease IV (phage-T4-induced) activity"/>
    <property type="evidence" value="ECO:0007669"/>
    <property type="project" value="UniProtKB-UniRule"/>
</dbReference>
<dbReference type="GO" id="GO:0003677">
    <property type="term" value="F:DNA binding"/>
    <property type="evidence" value="ECO:0007669"/>
    <property type="project" value="InterPro"/>
</dbReference>
<dbReference type="GO" id="GO:0003906">
    <property type="term" value="F:DNA-(apurinic or apyrimidinic site) endonuclease activity"/>
    <property type="evidence" value="ECO:0007669"/>
    <property type="project" value="TreeGrafter"/>
</dbReference>
<dbReference type="GO" id="GO:0008081">
    <property type="term" value="F:phosphoric diester hydrolase activity"/>
    <property type="evidence" value="ECO:0007669"/>
    <property type="project" value="TreeGrafter"/>
</dbReference>
<dbReference type="GO" id="GO:0008270">
    <property type="term" value="F:zinc ion binding"/>
    <property type="evidence" value="ECO:0007669"/>
    <property type="project" value="UniProtKB-UniRule"/>
</dbReference>
<dbReference type="GO" id="GO:0006284">
    <property type="term" value="P:base-excision repair"/>
    <property type="evidence" value="ECO:0007669"/>
    <property type="project" value="TreeGrafter"/>
</dbReference>
<dbReference type="CDD" id="cd00019">
    <property type="entry name" value="AP2Ec"/>
    <property type="match status" value="1"/>
</dbReference>
<dbReference type="FunFam" id="3.20.20.150:FF:000001">
    <property type="entry name" value="Probable endonuclease 4"/>
    <property type="match status" value="1"/>
</dbReference>
<dbReference type="Gene3D" id="3.20.20.150">
    <property type="entry name" value="Divalent-metal-dependent TIM barrel enzymes"/>
    <property type="match status" value="1"/>
</dbReference>
<dbReference type="HAMAP" id="MF_00152">
    <property type="entry name" value="Nfo"/>
    <property type="match status" value="1"/>
</dbReference>
<dbReference type="InterPro" id="IPR001719">
    <property type="entry name" value="AP_endonuc_2"/>
</dbReference>
<dbReference type="InterPro" id="IPR018246">
    <property type="entry name" value="AP_endonuc_F2_Zn_BS"/>
</dbReference>
<dbReference type="InterPro" id="IPR036237">
    <property type="entry name" value="Xyl_isomerase-like_sf"/>
</dbReference>
<dbReference type="InterPro" id="IPR013022">
    <property type="entry name" value="Xyl_isomerase-like_TIM-brl"/>
</dbReference>
<dbReference type="NCBIfam" id="TIGR00587">
    <property type="entry name" value="nfo"/>
    <property type="match status" value="1"/>
</dbReference>
<dbReference type="NCBIfam" id="NF002196">
    <property type="entry name" value="PRK01060.1-1"/>
    <property type="match status" value="1"/>
</dbReference>
<dbReference type="PANTHER" id="PTHR21445:SF0">
    <property type="entry name" value="APURINIC-APYRIMIDINIC ENDONUCLEASE"/>
    <property type="match status" value="1"/>
</dbReference>
<dbReference type="PANTHER" id="PTHR21445">
    <property type="entry name" value="ENDONUCLEASE IV ENDODEOXYRIBONUCLEASE IV"/>
    <property type="match status" value="1"/>
</dbReference>
<dbReference type="Pfam" id="PF01261">
    <property type="entry name" value="AP_endonuc_2"/>
    <property type="match status" value="1"/>
</dbReference>
<dbReference type="SMART" id="SM00518">
    <property type="entry name" value="AP2Ec"/>
    <property type="match status" value="1"/>
</dbReference>
<dbReference type="SUPFAM" id="SSF51658">
    <property type="entry name" value="Xylose isomerase-like"/>
    <property type="match status" value="1"/>
</dbReference>
<dbReference type="PROSITE" id="PS00729">
    <property type="entry name" value="AP_NUCLEASE_F2_1"/>
    <property type="match status" value="1"/>
</dbReference>
<dbReference type="PROSITE" id="PS00730">
    <property type="entry name" value="AP_NUCLEASE_F2_2"/>
    <property type="match status" value="1"/>
</dbReference>
<dbReference type="PROSITE" id="PS00731">
    <property type="entry name" value="AP_NUCLEASE_F2_3"/>
    <property type="match status" value="1"/>
</dbReference>
<dbReference type="PROSITE" id="PS51432">
    <property type="entry name" value="AP_NUCLEASE_F2_4"/>
    <property type="match status" value="1"/>
</dbReference>